<evidence type="ECO:0000255" key="1">
    <source>
        <dbReference type="HAMAP-Rule" id="MF_00189"/>
    </source>
</evidence>
<name>YCIB_SALNS</name>
<gene>
    <name evidence="1" type="primary">yciB</name>
    <name type="ordered locus">SNSL254_A1862</name>
</gene>
<organism>
    <name type="scientific">Salmonella newport (strain SL254)</name>
    <dbReference type="NCBI Taxonomy" id="423368"/>
    <lineage>
        <taxon>Bacteria</taxon>
        <taxon>Pseudomonadati</taxon>
        <taxon>Pseudomonadota</taxon>
        <taxon>Gammaproteobacteria</taxon>
        <taxon>Enterobacterales</taxon>
        <taxon>Enterobacteriaceae</taxon>
        <taxon>Salmonella</taxon>
    </lineage>
</organism>
<dbReference type="EMBL" id="CP001113">
    <property type="protein sequence ID" value="ACF61731.1"/>
    <property type="molecule type" value="Genomic_DNA"/>
</dbReference>
<dbReference type="RefSeq" id="WP_000808682.1">
    <property type="nucleotide sequence ID" value="NZ_CCMR01000003.1"/>
</dbReference>
<dbReference type="KEGG" id="see:SNSL254_A1862"/>
<dbReference type="HOGENOM" id="CLU_089554_2_0_6"/>
<dbReference type="Proteomes" id="UP000008824">
    <property type="component" value="Chromosome"/>
</dbReference>
<dbReference type="GO" id="GO:0005886">
    <property type="term" value="C:plasma membrane"/>
    <property type="evidence" value="ECO:0007669"/>
    <property type="project" value="UniProtKB-SubCell"/>
</dbReference>
<dbReference type="HAMAP" id="MF_00189">
    <property type="entry name" value="YciB"/>
    <property type="match status" value="1"/>
</dbReference>
<dbReference type="InterPro" id="IPR006008">
    <property type="entry name" value="YciB"/>
</dbReference>
<dbReference type="NCBIfam" id="TIGR00997">
    <property type="entry name" value="ispZ"/>
    <property type="match status" value="1"/>
</dbReference>
<dbReference type="NCBIfam" id="NF001324">
    <property type="entry name" value="PRK00259.1-2"/>
    <property type="match status" value="1"/>
</dbReference>
<dbReference type="NCBIfam" id="NF001325">
    <property type="entry name" value="PRK00259.1-3"/>
    <property type="match status" value="1"/>
</dbReference>
<dbReference type="NCBIfam" id="NF001326">
    <property type="entry name" value="PRK00259.1-4"/>
    <property type="match status" value="1"/>
</dbReference>
<dbReference type="PANTHER" id="PTHR36917:SF1">
    <property type="entry name" value="INNER MEMBRANE-SPANNING PROTEIN YCIB"/>
    <property type="match status" value="1"/>
</dbReference>
<dbReference type="PANTHER" id="PTHR36917">
    <property type="entry name" value="INTRACELLULAR SEPTATION PROTEIN A-RELATED"/>
    <property type="match status" value="1"/>
</dbReference>
<dbReference type="Pfam" id="PF04279">
    <property type="entry name" value="IspA"/>
    <property type="match status" value="1"/>
</dbReference>
<reference key="1">
    <citation type="journal article" date="2011" name="J. Bacteriol.">
        <title>Comparative genomics of 28 Salmonella enterica isolates: evidence for CRISPR-mediated adaptive sublineage evolution.</title>
        <authorList>
            <person name="Fricke W.F."/>
            <person name="Mammel M.K."/>
            <person name="McDermott P.F."/>
            <person name="Tartera C."/>
            <person name="White D.G."/>
            <person name="Leclerc J.E."/>
            <person name="Ravel J."/>
            <person name="Cebula T.A."/>
        </authorList>
    </citation>
    <scope>NUCLEOTIDE SEQUENCE [LARGE SCALE GENOMIC DNA]</scope>
    <source>
        <strain>SL254</strain>
    </source>
</reference>
<protein>
    <recommendedName>
        <fullName evidence="1">Inner membrane-spanning protein YciB</fullName>
    </recommendedName>
</protein>
<sequence length="179" mass="20763">MKQFLDFLPLVVFFAFYKLYDIYAATSALIVATAIVLIYSWVRYRKIEKMALITFVLVAVFGGLTLFFHNDEFIKWKVTVIYALFAGALLISQWVMKKPLIQRMLGKELALPQQVWSKLNLAWALFFIACGLANIYIAFWLPQNIWVNFKVFGLTALTLIFTLLSGVYIYRHLPQEDKS</sequence>
<keyword id="KW-0997">Cell inner membrane</keyword>
<keyword id="KW-1003">Cell membrane</keyword>
<keyword id="KW-0472">Membrane</keyword>
<keyword id="KW-0812">Transmembrane</keyword>
<keyword id="KW-1133">Transmembrane helix</keyword>
<accession>B4SUC4</accession>
<feature type="chain" id="PRO_1000098895" description="Inner membrane-spanning protein YciB">
    <location>
        <begin position="1"/>
        <end position="179"/>
    </location>
</feature>
<feature type="transmembrane region" description="Helical" evidence="1">
    <location>
        <begin position="22"/>
        <end position="42"/>
    </location>
</feature>
<feature type="transmembrane region" description="Helical" evidence="1">
    <location>
        <begin position="50"/>
        <end position="70"/>
    </location>
</feature>
<feature type="transmembrane region" description="Helical" evidence="1">
    <location>
        <begin position="76"/>
        <end position="96"/>
    </location>
</feature>
<feature type="transmembrane region" description="Helical" evidence="1">
    <location>
        <begin position="121"/>
        <end position="141"/>
    </location>
</feature>
<feature type="transmembrane region" description="Helical" evidence="1">
    <location>
        <begin position="149"/>
        <end position="169"/>
    </location>
</feature>
<proteinExistence type="inferred from homology"/>
<comment type="function">
    <text evidence="1">Plays a role in cell envelope biogenesis, maintenance of cell envelope integrity and membrane homeostasis.</text>
</comment>
<comment type="subcellular location">
    <subcellularLocation>
        <location evidence="1">Cell inner membrane</location>
        <topology evidence="1">Multi-pass membrane protein</topology>
    </subcellularLocation>
</comment>
<comment type="similarity">
    <text evidence="1">Belongs to the YciB family.</text>
</comment>